<sequence length="584" mass="64208">MKAVYLDYLLRIRYTYVFNLKVSYQSERRTYGATEHFVGCLVPKAWNCLADDYTDIKTLLDLLFGVTAVIIFACTFKCFTMTEDGLTKLNLEAFLGVSGNTQELLESLGISAIPDLSNLGASNNNNSGLTFDPNDPSAAAFYIAQQVAAIEHPPPRKMTSSEKTRSENRERKKRWREQNEERNKDNDLRCRVNKKAKKLFGSEPSIEKTNWIEAEFTRRHTKRKEKERACLSQNQSSNASRANSQSLLPDLDLLATNSSANAVLQGSAINNALNALAKDPNLIHSLLTQIDFDPSKSKDGLNLGSLTDVVPPQPPQPEHELAALQEHNEAHDAAMRQYELERQQNAMLPGLASIDGLQALPHLDFSDSAVTNQSHSQSQNSLHPLISQSETHSIFSALSETPTPVSGNGNVADAPPDFSLSQVMPLDLIAPSMQPSAVSSPMSESHVQISSEMPRTGMSALPMRPRSQNVDKHRKFPYYNKRNAVTTPSSPYDGAQSGSPQFPPFELPPHNYSQAQSPNLATPSPSFSSLPDVSLPPIVKPNLMSEPTPTNSDEKSHALGFPPPPGQKIEFQRSSSKNGTAKSD</sequence>
<feature type="chain" id="PRO_0000116528" description="Uncharacterized protein C17D1.01">
    <location>
        <begin position="1"/>
        <end position="584"/>
    </location>
</feature>
<feature type="region of interest" description="Disordered" evidence="1">
    <location>
        <begin position="151"/>
        <end position="188"/>
    </location>
</feature>
<feature type="region of interest" description="Disordered" evidence="1">
    <location>
        <begin position="222"/>
        <end position="243"/>
    </location>
</feature>
<feature type="region of interest" description="Disordered" evidence="1">
    <location>
        <begin position="399"/>
        <end position="418"/>
    </location>
</feature>
<feature type="region of interest" description="Disordered" evidence="1">
    <location>
        <begin position="433"/>
        <end position="584"/>
    </location>
</feature>
<feature type="compositionally biased region" description="Basic and acidic residues" evidence="1">
    <location>
        <begin position="159"/>
        <end position="188"/>
    </location>
</feature>
<feature type="compositionally biased region" description="Low complexity" evidence="1">
    <location>
        <begin position="231"/>
        <end position="243"/>
    </location>
</feature>
<feature type="compositionally biased region" description="Polar residues" evidence="1">
    <location>
        <begin position="399"/>
        <end position="409"/>
    </location>
</feature>
<feature type="compositionally biased region" description="Polar residues" evidence="1">
    <location>
        <begin position="433"/>
        <end position="453"/>
    </location>
</feature>
<feature type="compositionally biased region" description="Polar residues" evidence="1">
    <location>
        <begin position="483"/>
        <end position="500"/>
    </location>
</feature>
<feature type="compositionally biased region" description="Polar residues" evidence="1">
    <location>
        <begin position="511"/>
        <end position="531"/>
    </location>
</feature>
<feature type="compositionally biased region" description="Polar residues" evidence="1">
    <location>
        <begin position="572"/>
        <end position="584"/>
    </location>
</feature>
<reference key="1">
    <citation type="journal article" date="2002" name="Nature">
        <title>The genome sequence of Schizosaccharomyces pombe.</title>
        <authorList>
            <person name="Wood V."/>
            <person name="Gwilliam R."/>
            <person name="Rajandream M.A."/>
            <person name="Lyne M.H."/>
            <person name="Lyne R."/>
            <person name="Stewart A."/>
            <person name="Sgouros J.G."/>
            <person name="Peat N."/>
            <person name="Hayles J."/>
            <person name="Baker S.G."/>
            <person name="Basham D."/>
            <person name="Bowman S."/>
            <person name="Brooks K."/>
            <person name="Brown D."/>
            <person name="Brown S."/>
            <person name="Chillingworth T."/>
            <person name="Churcher C.M."/>
            <person name="Collins M."/>
            <person name="Connor R."/>
            <person name="Cronin A."/>
            <person name="Davis P."/>
            <person name="Feltwell T."/>
            <person name="Fraser A."/>
            <person name="Gentles S."/>
            <person name="Goble A."/>
            <person name="Hamlin N."/>
            <person name="Harris D.E."/>
            <person name="Hidalgo J."/>
            <person name="Hodgson G."/>
            <person name="Holroyd S."/>
            <person name="Hornsby T."/>
            <person name="Howarth S."/>
            <person name="Huckle E.J."/>
            <person name="Hunt S."/>
            <person name="Jagels K."/>
            <person name="James K.D."/>
            <person name="Jones L."/>
            <person name="Jones M."/>
            <person name="Leather S."/>
            <person name="McDonald S."/>
            <person name="McLean J."/>
            <person name="Mooney P."/>
            <person name="Moule S."/>
            <person name="Mungall K.L."/>
            <person name="Murphy L.D."/>
            <person name="Niblett D."/>
            <person name="Odell C."/>
            <person name="Oliver K."/>
            <person name="O'Neil S."/>
            <person name="Pearson D."/>
            <person name="Quail M.A."/>
            <person name="Rabbinowitsch E."/>
            <person name="Rutherford K.M."/>
            <person name="Rutter S."/>
            <person name="Saunders D."/>
            <person name="Seeger K."/>
            <person name="Sharp S."/>
            <person name="Skelton J."/>
            <person name="Simmonds M.N."/>
            <person name="Squares R."/>
            <person name="Squares S."/>
            <person name="Stevens K."/>
            <person name="Taylor K."/>
            <person name="Taylor R.G."/>
            <person name="Tivey A."/>
            <person name="Walsh S.V."/>
            <person name="Warren T."/>
            <person name="Whitehead S."/>
            <person name="Woodward J.R."/>
            <person name="Volckaert G."/>
            <person name="Aert R."/>
            <person name="Robben J."/>
            <person name="Grymonprez B."/>
            <person name="Weltjens I."/>
            <person name="Vanstreels E."/>
            <person name="Rieger M."/>
            <person name="Schaefer M."/>
            <person name="Mueller-Auer S."/>
            <person name="Gabel C."/>
            <person name="Fuchs M."/>
            <person name="Duesterhoeft A."/>
            <person name="Fritzc C."/>
            <person name="Holzer E."/>
            <person name="Moestl D."/>
            <person name="Hilbert H."/>
            <person name="Borzym K."/>
            <person name="Langer I."/>
            <person name="Beck A."/>
            <person name="Lehrach H."/>
            <person name="Reinhardt R."/>
            <person name="Pohl T.M."/>
            <person name="Eger P."/>
            <person name="Zimmermann W."/>
            <person name="Wedler H."/>
            <person name="Wambutt R."/>
            <person name="Purnelle B."/>
            <person name="Goffeau A."/>
            <person name="Cadieu E."/>
            <person name="Dreano S."/>
            <person name="Gloux S."/>
            <person name="Lelaure V."/>
            <person name="Mottier S."/>
            <person name="Galibert F."/>
            <person name="Aves S.J."/>
            <person name="Xiang Z."/>
            <person name="Hunt C."/>
            <person name="Moore K."/>
            <person name="Hurst S.M."/>
            <person name="Lucas M."/>
            <person name="Rochet M."/>
            <person name="Gaillardin C."/>
            <person name="Tallada V.A."/>
            <person name="Garzon A."/>
            <person name="Thode G."/>
            <person name="Daga R.R."/>
            <person name="Cruzado L."/>
            <person name="Jimenez J."/>
            <person name="Sanchez M."/>
            <person name="del Rey F."/>
            <person name="Benito J."/>
            <person name="Dominguez A."/>
            <person name="Revuelta J.L."/>
            <person name="Moreno S."/>
            <person name="Armstrong J."/>
            <person name="Forsburg S.L."/>
            <person name="Cerutti L."/>
            <person name="Lowe T."/>
            <person name="McCombie W.R."/>
            <person name="Paulsen I."/>
            <person name="Potashkin J."/>
            <person name="Shpakovski G.V."/>
            <person name="Ussery D."/>
            <person name="Barrell B.G."/>
            <person name="Nurse P."/>
        </authorList>
    </citation>
    <scope>NUCLEOTIDE SEQUENCE [LARGE SCALE GENOMIC DNA]</scope>
    <source>
        <strain>972 / ATCC 24843</strain>
    </source>
</reference>
<dbReference type="EMBL" id="CU329671">
    <property type="protein sequence ID" value="CAA20425.1"/>
    <property type="molecule type" value="Genomic_DNA"/>
</dbReference>
<dbReference type="PIR" id="T39704">
    <property type="entry name" value="T39704"/>
</dbReference>
<dbReference type="RefSeq" id="XP_001713144.1">
    <property type="nucleotide sequence ID" value="XM_001713092.2"/>
</dbReference>
<dbReference type="BioGRID" id="276277">
    <property type="interactions" value="1"/>
</dbReference>
<dbReference type="IntAct" id="Q10207">
    <property type="interactions" value="1"/>
</dbReference>
<dbReference type="MINT" id="Q10207"/>
<dbReference type="iPTMnet" id="Q10207"/>
<dbReference type="PaxDb" id="4896-SPBC17D1.01.1"/>
<dbReference type="EnsemblFungi" id="SPBC17D1.01.1">
    <property type="protein sequence ID" value="SPBC17D1.01.1:pep"/>
    <property type="gene ID" value="SPBC17D1.01"/>
</dbReference>
<dbReference type="PomBase" id="SPBC17D1.01"/>
<dbReference type="VEuPathDB" id="FungiDB:SPBC17D1.01"/>
<dbReference type="eggNOG" id="ENOG502S97X">
    <property type="taxonomic scope" value="Eukaryota"/>
</dbReference>
<dbReference type="HOGENOM" id="CLU_538798_0_0_1"/>
<dbReference type="InParanoid" id="Q10207"/>
<dbReference type="OMA" id="HNEAHDA"/>
<dbReference type="PRO" id="PR:Q10207"/>
<dbReference type="Proteomes" id="UP000002485">
    <property type="component" value="Chromosome II"/>
</dbReference>
<dbReference type="GO" id="GO:0005829">
    <property type="term" value="C:cytosol"/>
    <property type="evidence" value="ECO:0007005"/>
    <property type="project" value="PomBase"/>
</dbReference>
<dbReference type="GO" id="GO:0005634">
    <property type="term" value="C:nucleus"/>
    <property type="evidence" value="ECO:0007005"/>
    <property type="project" value="PomBase"/>
</dbReference>
<dbReference type="InterPro" id="IPR021386">
    <property type="entry name" value="SPP41_DUF3020"/>
</dbReference>
<dbReference type="Pfam" id="PF11223">
    <property type="entry name" value="DUF3020"/>
    <property type="match status" value="1"/>
</dbReference>
<keyword id="KW-1185">Reference proteome</keyword>
<organism>
    <name type="scientific">Schizosaccharomyces pombe (strain 972 / ATCC 24843)</name>
    <name type="common">Fission yeast</name>
    <dbReference type="NCBI Taxonomy" id="284812"/>
    <lineage>
        <taxon>Eukaryota</taxon>
        <taxon>Fungi</taxon>
        <taxon>Dikarya</taxon>
        <taxon>Ascomycota</taxon>
        <taxon>Taphrinomycotina</taxon>
        <taxon>Schizosaccharomycetes</taxon>
        <taxon>Schizosaccharomycetales</taxon>
        <taxon>Schizosaccharomycetaceae</taxon>
        <taxon>Schizosaccharomyces</taxon>
    </lineage>
</organism>
<name>YBX1_SCHPO</name>
<evidence type="ECO:0000256" key="1">
    <source>
        <dbReference type="SAM" id="MobiDB-lite"/>
    </source>
</evidence>
<gene>
    <name type="ORF">SPBC17D1.01</name>
    <name type="ORF">SPBC17D11.09</name>
</gene>
<proteinExistence type="predicted"/>
<protein>
    <recommendedName>
        <fullName>Uncharacterized protein C17D1.01</fullName>
    </recommendedName>
</protein>
<accession>Q10207</accession>